<accession>B4TRX2</accession>
<evidence type="ECO:0000255" key="1">
    <source>
        <dbReference type="HAMAP-Rule" id="MF_00682"/>
    </source>
</evidence>
<name>HSCB_SALSV</name>
<proteinExistence type="inferred from homology"/>
<comment type="function">
    <text evidence="1">Co-chaperone involved in the maturation of iron-sulfur cluster-containing proteins. Seems to help targeting proteins to be folded toward HscA.</text>
</comment>
<comment type="subunit">
    <text evidence="1">Interacts with HscA and stimulates its ATPase activity. Interacts with IscU.</text>
</comment>
<comment type="similarity">
    <text evidence="1">Belongs to the HscB family.</text>
</comment>
<sequence length="171" mass="20009">MDYFTLFGLPARYQIDTQALSLRFQDLQRQYHPDKFANGTQAQQLAAVQQSATINQAWQTLRHPLTRAEYLLSLHGFDLASEQHTVRDTAFLMEQLTLREELDDIEQSKDDVRLESFIKRVQKMFDARLQQMVEQLDNAAWDAAADTVRKLRFLDKLRSSAEQLEEKLLDF</sequence>
<protein>
    <recommendedName>
        <fullName evidence="1">Co-chaperone protein HscB</fullName>
    </recommendedName>
    <alternativeName>
        <fullName evidence="1">Hsc20</fullName>
    </alternativeName>
</protein>
<feature type="chain" id="PRO_1000131755" description="Co-chaperone protein HscB">
    <location>
        <begin position="1"/>
        <end position="171"/>
    </location>
</feature>
<feature type="domain" description="J" evidence="1">
    <location>
        <begin position="2"/>
        <end position="74"/>
    </location>
</feature>
<keyword id="KW-0143">Chaperone</keyword>
<dbReference type="EMBL" id="CP001127">
    <property type="protein sequence ID" value="ACF90613.1"/>
    <property type="molecule type" value="Genomic_DNA"/>
</dbReference>
<dbReference type="RefSeq" id="WP_000384398.1">
    <property type="nucleotide sequence ID" value="NC_011094.1"/>
</dbReference>
<dbReference type="SMR" id="B4TRX2"/>
<dbReference type="KEGG" id="sew:SeSA_A2780"/>
<dbReference type="HOGENOM" id="CLU_068529_2_0_6"/>
<dbReference type="Proteomes" id="UP000001865">
    <property type="component" value="Chromosome"/>
</dbReference>
<dbReference type="GO" id="GO:1990230">
    <property type="term" value="C:iron-sulfur cluster transfer complex"/>
    <property type="evidence" value="ECO:0007669"/>
    <property type="project" value="TreeGrafter"/>
</dbReference>
<dbReference type="GO" id="GO:0001671">
    <property type="term" value="F:ATPase activator activity"/>
    <property type="evidence" value="ECO:0007669"/>
    <property type="project" value="InterPro"/>
</dbReference>
<dbReference type="GO" id="GO:0051087">
    <property type="term" value="F:protein-folding chaperone binding"/>
    <property type="evidence" value="ECO:0007669"/>
    <property type="project" value="InterPro"/>
</dbReference>
<dbReference type="GO" id="GO:0044571">
    <property type="term" value="P:[2Fe-2S] cluster assembly"/>
    <property type="evidence" value="ECO:0007669"/>
    <property type="project" value="InterPro"/>
</dbReference>
<dbReference type="GO" id="GO:0051259">
    <property type="term" value="P:protein complex oligomerization"/>
    <property type="evidence" value="ECO:0007669"/>
    <property type="project" value="InterPro"/>
</dbReference>
<dbReference type="GO" id="GO:0006457">
    <property type="term" value="P:protein folding"/>
    <property type="evidence" value="ECO:0007669"/>
    <property type="project" value="UniProtKB-UniRule"/>
</dbReference>
<dbReference type="CDD" id="cd06257">
    <property type="entry name" value="DnaJ"/>
    <property type="match status" value="1"/>
</dbReference>
<dbReference type="FunFam" id="1.10.287.110:FF:000008">
    <property type="entry name" value="Co-chaperone protein HscB"/>
    <property type="match status" value="1"/>
</dbReference>
<dbReference type="FunFam" id="1.20.1280.20:FF:000001">
    <property type="entry name" value="Co-chaperone protein HscB"/>
    <property type="match status" value="1"/>
</dbReference>
<dbReference type="Gene3D" id="1.10.287.110">
    <property type="entry name" value="DnaJ domain"/>
    <property type="match status" value="1"/>
</dbReference>
<dbReference type="Gene3D" id="1.20.1280.20">
    <property type="entry name" value="HscB, C-terminal domain"/>
    <property type="match status" value="1"/>
</dbReference>
<dbReference type="HAMAP" id="MF_00682">
    <property type="entry name" value="HscB"/>
    <property type="match status" value="1"/>
</dbReference>
<dbReference type="InterPro" id="IPR001623">
    <property type="entry name" value="DnaJ_domain"/>
</dbReference>
<dbReference type="InterPro" id="IPR004640">
    <property type="entry name" value="HscB"/>
</dbReference>
<dbReference type="InterPro" id="IPR036386">
    <property type="entry name" value="HscB_C_sf"/>
</dbReference>
<dbReference type="InterPro" id="IPR009073">
    <property type="entry name" value="HscB_oligo_C"/>
</dbReference>
<dbReference type="InterPro" id="IPR036869">
    <property type="entry name" value="J_dom_sf"/>
</dbReference>
<dbReference type="NCBIfam" id="TIGR00714">
    <property type="entry name" value="hscB"/>
    <property type="match status" value="1"/>
</dbReference>
<dbReference type="NCBIfam" id="NF003449">
    <property type="entry name" value="PRK05014.1"/>
    <property type="match status" value="1"/>
</dbReference>
<dbReference type="PANTHER" id="PTHR14021">
    <property type="entry name" value="IRON-SULFUR CLUSTER CO-CHAPERONE PROTEIN HSCB"/>
    <property type="match status" value="1"/>
</dbReference>
<dbReference type="PANTHER" id="PTHR14021:SF15">
    <property type="entry name" value="IRON-SULFUR CLUSTER CO-CHAPERONE PROTEIN HSCB"/>
    <property type="match status" value="1"/>
</dbReference>
<dbReference type="Pfam" id="PF07743">
    <property type="entry name" value="HSCB_C"/>
    <property type="match status" value="1"/>
</dbReference>
<dbReference type="SMART" id="SM00271">
    <property type="entry name" value="DnaJ"/>
    <property type="match status" value="1"/>
</dbReference>
<dbReference type="SUPFAM" id="SSF46565">
    <property type="entry name" value="Chaperone J-domain"/>
    <property type="match status" value="1"/>
</dbReference>
<dbReference type="SUPFAM" id="SSF47144">
    <property type="entry name" value="HSC20 (HSCB), C-terminal oligomerisation domain"/>
    <property type="match status" value="1"/>
</dbReference>
<dbReference type="PROSITE" id="PS50076">
    <property type="entry name" value="DNAJ_2"/>
    <property type="match status" value="1"/>
</dbReference>
<gene>
    <name evidence="1" type="primary">hscB</name>
    <name type="ordered locus">SeSA_A2780</name>
</gene>
<organism>
    <name type="scientific">Salmonella schwarzengrund (strain CVM19633)</name>
    <dbReference type="NCBI Taxonomy" id="439843"/>
    <lineage>
        <taxon>Bacteria</taxon>
        <taxon>Pseudomonadati</taxon>
        <taxon>Pseudomonadota</taxon>
        <taxon>Gammaproteobacteria</taxon>
        <taxon>Enterobacterales</taxon>
        <taxon>Enterobacteriaceae</taxon>
        <taxon>Salmonella</taxon>
    </lineage>
</organism>
<reference key="1">
    <citation type="journal article" date="2011" name="J. Bacteriol.">
        <title>Comparative genomics of 28 Salmonella enterica isolates: evidence for CRISPR-mediated adaptive sublineage evolution.</title>
        <authorList>
            <person name="Fricke W.F."/>
            <person name="Mammel M.K."/>
            <person name="McDermott P.F."/>
            <person name="Tartera C."/>
            <person name="White D.G."/>
            <person name="Leclerc J.E."/>
            <person name="Ravel J."/>
            <person name="Cebula T.A."/>
        </authorList>
    </citation>
    <scope>NUCLEOTIDE SEQUENCE [LARGE SCALE GENOMIC DNA]</scope>
    <source>
        <strain>CVM19633</strain>
    </source>
</reference>